<name>KM11_LEITR</name>
<keyword id="KW-0963">Cytoplasm</keyword>
<keyword id="KW-0206">Cytoskeleton</keyword>
<keyword id="KW-0493">Microtubule</keyword>
<organism evidence="5">
    <name type="scientific">Leishmania tropica</name>
    <dbReference type="NCBI Taxonomy" id="5666"/>
    <lineage>
        <taxon>Eukaryota</taxon>
        <taxon>Discoba</taxon>
        <taxon>Euglenozoa</taxon>
        <taxon>Kinetoplastea</taxon>
        <taxon>Metakinetoplastina</taxon>
        <taxon>Trypanosomatida</taxon>
        <taxon>Trypanosomatidae</taxon>
        <taxon>Leishmaniinae</taxon>
        <taxon>Leishmania</taxon>
    </lineage>
</organism>
<protein>
    <recommendedName>
        <fullName>Kinetoplastid membrane protein 11</fullName>
        <shortName>KMP-11</shortName>
    </recommendedName>
</protein>
<dbReference type="EMBL" id="AJ000078">
    <property type="protein sequence ID" value="CAA03902.1"/>
    <property type="molecule type" value="mRNA"/>
</dbReference>
<dbReference type="SMR" id="O21436"/>
<dbReference type="VEuPathDB" id="TriTrypDB:LTRL590_350027600"/>
<dbReference type="GO" id="GO:0005737">
    <property type="term" value="C:cytoplasm"/>
    <property type="evidence" value="ECO:0007669"/>
    <property type="project" value="UniProtKB-SubCell"/>
</dbReference>
<dbReference type="GO" id="GO:0005874">
    <property type="term" value="C:microtubule"/>
    <property type="evidence" value="ECO:0007669"/>
    <property type="project" value="UniProtKB-KW"/>
</dbReference>
<dbReference type="GO" id="GO:0015630">
    <property type="term" value="C:microtubule cytoskeleton"/>
    <property type="evidence" value="ECO:0000250"/>
    <property type="project" value="UniProtKB"/>
</dbReference>
<dbReference type="GO" id="GO:0007010">
    <property type="term" value="P:cytoskeleton organization"/>
    <property type="evidence" value="ECO:0000250"/>
    <property type="project" value="UniProtKB"/>
</dbReference>
<dbReference type="GO" id="GO:0006952">
    <property type="term" value="P:defense response"/>
    <property type="evidence" value="ECO:0007669"/>
    <property type="project" value="InterPro"/>
</dbReference>
<dbReference type="GO" id="GO:0008284">
    <property type="term" value="P:positive regulation of cell population proliferation"/>
    <property type="evidence" value="ECO:0007669"/>
    <property type="project" value="InterPro"/>
</dbReference>
<dbReference type="Gene3D" id="1.20.120.20">
    <property type="entry name" value="Apolipoprotein"/>
    <property type="match status" value="1"/>
</dbReference>
<dbReference type="InterPro" id="IPR004132">
    <property type="entry name" value="KMP11"/>
</dbReference>
<dbReference type="Pfam" id="PF03037">
    <property type="entry name" value="KMP11"/>
    <property type="match status" value="1"/>
</dbReference>
<reference evidence="5" key="1">
    <citation type="journal article" date="2000" name="DNA Cell Biol.">
        <title>Molecular characterization of KMP11 from Trypanosoma cruzi: a cytoskeleton-associated protein regulated at the translational level.</title>
        <authorList>
            <person name="Thomas M.C."/>
            <person name="Garcia-Perez J.L."/>
            <person name="Alonso C."/>
            <person name="Lopez M.C."/>
        </authorList>
    </citation>
    <scope>NUCLEOTIDE SEQUENCE [MRNA]</scope>
</reference>
<sequence>MATTYEEFSAKLDRLDEEFNRKMQEQNAKFFADKPDESTLSPEMKEHYEKFERMIKEHTEKFNKKMHEHSEHFKQKFAELLEQQKAAQYPSK</sequence>
<gene>
    <name type="primary">KMP-11</name>
</gene>
<evidence type="ECO:0000250" key="1"/>
<evidence type="ECO:0000250" key="2">
    <source>
        <dbReference type="UniProtKB" id="Q25297"/>
    </source>
</evidence>
<evidence type="ECO:0000250" key="3">
    <source>
        <dbReference type="UniProtKB" id="Q9U6Z1"/>
    </source>
</evidence>
<evidence type="ECO:0000305" key="4"/>
<evidence type="ECO:0000312" key="5">
    <source>
        <dbReference type="EMBL" id="CAA03902.1"/>
    </source>
</evidence>
<feature type="chain" id="PRO_0000205714" description="Kinetoplastid membrane protein 11">
    <location>
        <begin position="1"/>
        <end position="92"/>
    </location>
</feature>
<comment type="function">
    <text evidence="3">May be involved in the regulation of the cytoskeleton through interaction with the subpellicular microtubules. May be involved in parasite mobility and attachment to the surface of the host cell. Behaves as a strong immunogen during infection (By similarity).</text>
</comment>
<comment type="subunit">
    <text evidence="2">Monomer.</text>
</comment>
<comment type="subcellular location">
    <subcellularLocation>
        <location evidence="1">Cytoplasm</location>
    </subcellularLocation>
    <subcellularLocation>
        <location evidence="1">Cytoplasm</location>
        <location evidence="1">Cytoskeleton</location>
    </subcellularLocation>
    <text evidence="1">Associated with microtubules.</text>
</comment>
<comment type="similarity">
    <text evidence="4">Belongs to the KMP-11 family.</text>
</comment>
<accession>O21436</accession>
<proteinExistence type="inferred from homology"/>